<protein>
    <recommendedName>
        <fullName evidence="14">Histone acetyltransferase mst1</fullName>
        <ecNumber evidence="9">2.3.1.48</ecNumber>
    </recommendedName>
    <alternativeName>
        <fullName evidence="14">Protein 2-hydroxyisobutyryltransferase mst1</fullName>
        <ecNumber evidence="10">2.3.1.-</ecNumber>
    </alternativeName>
    <alternativeName>
        <fullName evidence="14">Protein acetyltransferase mst1</fullName>
        <ecNumber evidence="1">2.3.1.-</ecNumber>
    </alternativeName>
    <alternativeName>
        <fullName evidence="14">Protein crotonyltransferase mst1</fullName>
        <ecNumber evidence="1">2.3.1.-</ecNumber>
    </alternativeName>
</protein>
<proteinExistence type="evidence at protein level"/>
<evidence type="ECO:0000250" key="1">
    <source>
        <dbReference type="UniProtKB" id="Q08649"/>
    </source>
</evidence>
<evidence type="ECO:0000255" key="2"/>
<evidence type="ECO:0000255" key="3">
    <source>
        <dbReference type="PROSITE-ProRule" id="PRU01063"/>
    </source>
</evidence>
<evidence type="ECO:0000256" key="4">
    <source>
        <dbReference type="SAM" id="MobiDB-lite"/>
    </source>
</evidence>
<evidence type="ECO:0000269" key="5">
    <source>
    </source>
</evidence>
<evidence type="ECO:0000269" key="6">
    <source>
    </source>
</evidence>
<evidence type="ECO:0000269" key="7">
    <source>
    </source>
</evidence>
<evidence type="ECO:0000269" key="8">
    <source>
    </source>
</evidence>
<evidence type="ECO:0000269" key="9">
    <source>
    </source>
</evidence>
<evidence type="ECO:0000269" key="10">
    <source>
    </source>
</evidence>
<evidence type="ECO:0000269" key="11">
    <source>
    </source>
</evidence>
<evidence type="ECO:0000303" key="12">
    <source>
    </source>
</evidence>
<evidence type="ECO:0000303" key="13">
    <source>
    </source>
</evidence>
<evidence type="ECO:0000305" key="14"/>
<evidence type="ECO:0000312" key="15">
    <source>
        <dbReference type="PomBase" id="SPAC637.12c"/>
    </source>
</evidence>
<comment type="function">
    <text evidence="1 7 8 10 11">Catalytic component of the NuA4 histone acetyltransferase (HAT) complex which is involved in epigenetic transcriptional activation of selected genes principally by acetylation of nucleosomal histones H4, H3, H2B, H2A and H2A variant H2A.Z (PubMed:16199868). Acetylates histone H4 to form H4K5ac, H4K8ac, H4K12ac and H4K16ac, histone H3 to form H3K14ac, and histone H2A to form H2AK4ac and H2AK7ac (By similarity). The NuA4 complex is involved in the DNA damage response and is required for chromosome segregation (PubMed:18505873, PubMed:33723569). The NuA4 complex plays a direct role in repair of DNA double-strand breaks (DSBs) through homologous recombination (PubMed:33723569). Recruitment to promoters depends on H3K4me (By similarity). Also acetylates non-histone proteins (By similarity). In addition to protein acetyltransferase, can use different acyl-CoA substrates, such as 2-hydroxyisobutanoyl-CoA (2-hydroxyisobutyryl-CoA) or (2E)-butenoyl-CoA (crotonyl-CoA), and is able to mediate protein 2-hydroxyisobutyrylation and crotonylation, respectively (PubMed:29192674).</text>
</comment>
<comment type="catalytic activity">
    <reaction evidence="9">
        <text>L-lysyl-[histone] + acetyl-CoA = N(6)-acetyl-L-lysyl-[histone] + CoA + H(+)</text>
        <dbReference type="Rhea" id="RHEA:21992"/>
        <dbReference type="Rhea" id="RHEA-COMP:9845"/>
        <dbReference type="Rhea" id="RHEA-COMP:11338"/>
        <dbReference type="ChEBI" id="CHEBI:15378"/>
        <dbReference type="ChEBI" id="CHEBI:29969"/>
        <dbReference type="ChEBI" id="CHEBI:57287"/>
        <dbReference type="ChEBI" id="CHEBI:57288"/>
        <dbReference type="ChEBI" id="CHEBI:61930"/>
        <dbReference type="EC" id="2.3.1.48"/>
    </reaction>
    <physiologicalReaction direction="left-to-right" evidence="9">
        <dbReference type="Rhea" id="RHEA:21993"/>
    </physiologicalReaction>
</comment>
<comment type="catalytic activity">
    <reaction evidence="1">
        <text>L-lysyl-[protein] + acetyl-CoA = N(6)-acetyl-L-lysyl-[protein] + CoA + H(+)</text>
        <dbReference type="Rhea" id="RHEA:45948"/>
        <dbReference type="Rhea" id="RHEA-COMP:9752"/>
        <dbReference type="Rhea" id="RHEA-COMP:10731"/>
        <dbReference type="ChEBI" id="CHEBI:15378"/>
        <dbReference type="ChEBI" id="CHEBI:29969"/>
        <dbReference type="ChEBI" id="CHEBI:57287"/>
        <dbReference type="ChEBI" id="CHEBI:57288"/>
        <dbReference type="ChEBI" id="CHEBI:61930"/>
    </reaction>
    <physiologicalReaction direction="left-to-right" evidence="1">
        <dbReference type="Rhea" id="RHEA:45949"/>
    </physiologicalReaction>
</comment>
<comment type="catalytic activity">
    <reaction evidence="10">
        <text>2-hydroxyisobutanoyl-CoA + L-lysyl-[protein] = N(6)-(2-hydroxyisobutanoyl)-L-lysyl-[protein] + CoA + H(+)</text>
        <dbReference type="Rhea" id="RHEA:24180"/>
        <dbReference type="Rhea" id="RHEA-COMP:9752"/>
        <dbReference type="Rhea" id="RHEA-COMP:15921"/>
        <dbReference type="ChEBI" id="CHEBI:15378"/>
        <dbReference type="ChEBI" id="CHEBI:29969"/>
        <dbReference type="ChEBI" id="CHEBI:57287"/>
        <dbReference type="ChEBI" id="CHEBI:131780"/>
        <dbReference type="ChEBI" id="CHEBI:144968"/>
    </reaction>
    <physiologicalReaction direction="left-to-right" evidence="10">
        <dbReference type="Rhea" id="RHEA:24181"/>
    </physiologicalReaction>
</comment>
<comment type="catalytic activity">
    <reaction evidence="1">
        <text>(2E)-butenoyl-CoA + L-lysyl-[protein] = N(6)-(2E)-butenoyl-L-lysyl-[protein] + CoA + H(+)</text>
        <dbReference type="Rhea" id="RHEA:53908"/>
        <dbReference type="Rhea" id="RHEA-COMP:9752"/>
        <dbReference type="Rhea" id="RHEA-COMP:13707"/>
        <dbReference type="ChEBI" id="CHEBI:15378"/>
        <dbReference type="ChEBI" id="CHEBI:29969"/>
        <dbReference type="ChEBI" id="CHEBI:57287"/>
        <dbReference type="ChEBI" id="CHEBI:57332"/>
        <dbReference type="ChEBI" id="CHEBI:137954"/>
    </reaction>
    <physiologicalReaction direction="left-to-right" evidence="1">
        <dbReference type="Rhea" id="RHEA:53909"/>
    </physiologicalReaction>
</comment>
<comment type="subunit">
    <text evidence="1 6">Component of the NuA4 histone acetyltransferase complex (By similarity). Interacts with arp4 (PubMed:15483052).</text>
</comment>
<comment type="subcellular location">
    <subcellularLocation>
        <location evidence="5 7">Nucleus</location>
    </subcellularLocation>
    <subcellularLocation>
        <location evidence="9 11">Chromosome</location>
    </subcellularLocation>
    <text evidence="9 11">Localizes to pericentric heterochromatin (PubMed:20299449). Following DNA damage, localizes to sites of DNA damage, such as double stand breaks (DSBs) (PubMed:33723569).</text>
</comment>
<comment type="domain">
    <text evidence="1">The ESA1-RPD3 motif is common to ESA1 and RPD3 and is required for ESA1 histone acetyl-transferase (HAT) activity and RPD3 histone deacetylase (HDAC) activity.</text>
</comment>
<comment type="PTM">
    <text evidence="1">Autoacetylation at Lys-279 is required for proper function.</text>
</comment>
<comment type="similarity">
    <text evidence="14">Belongs to the MYST (SAS/MOZ) family.</text>
</comment>
<dbReference type="EC" id="2.3.1.48" evidence="9"/>
<dbReference type="EC" id="2.3.1.-" evidence="10 1"/>
<dbReference type="EMBL" id="CU329670">
    <property type="protein sequence ID" value="CAA22591.1"/>
    <property type="molecule type" value="Genomic_DNA"/>
</dbReference>
<dbReference type="EMBL" id="AB027858">
    <property type="protein sequence ID" value="BAA87162.1"/>
    <property type="molecule type" value="Genomic_DNA"/>
</dbReference>
<dbReference type="PIR" id="T39004">
    <property type="entry name" value="T39004"/>
</dbReference>
<dbReference type="RefSeq" id="NP_594630.1">
    <property type="nucleotide sequence ID" value="NM_001020058.2"/>
</dbReference>
<dbReference type="SMR" id="O94446"/>
<dbReference type="BioGRID" id="279924">
    <property type="interactions" value="39"/>
</dbReference>
<dbReference type="FunCoup" id="O94446">
    <property type="interactions" value="813"/>
</dbReference>
<dbReference type="IntAct" id="O94446">
    <property type="interactions" value="3"/>
</dbReference>
<dbReference type="MINT" id="O94446"/>
<dbReference type="STRING" id="284812.O94446"/>
<dbReference type="iPTMnet" id="O94446"/>
<dbReference type="PaxDb" id="4896-SPAC637.12c.1"/>
<dbReference type="EnsemblFungi" id="SPAC637.12c.1">
    <property type="protein sequence ID" value="SPAC637.12c.1:pep"/>
    <property type="gene ID" value="SPAC637.12c"/>
</dbReference>
<dbReference type="GeneID" id="2543506"/>
<dbReference type="KEGG" id="spo:2543506"/>
<dbReference type="PomBase" id="SPAC637.12c">
    <property type="gene designation" value="mst1"/>
</dbReference>
<dbReference type="VEuPathDB" id="FungiDB:SPAC637.12c"/>
<dbReference type="eggNOG" id="KOG2747">
    <property type="taxonomic scope" value="Eukaryota"/>
</dbReference>
<dbReference type="HOGENOM" id="CLU_011815_2_0_1"/>
<dbReference type="InParanoid" id="O94446"/>
<dbReference type="OMA" id="QYQRHGY"/>
<dbReference type="PhylomeDB" id="O94446"/>
<dbReference type="Reactome" id="R-SPO-2559586">
    <property type="pathway name" value="DNA Damage/Telomere Stress Induced Senescence"/>
</dbReference>
<dbReference type="Reactome" id="R-SPO-5693548">
    <property type="pathway name" value="Sensing of DNA Double Strand Breaks"/>
</dbReference>
<dbReference type="Reactome" id="R-SPO-5693565">
    <property type="pathway name" value="Recruitment and ATM-mediated phosphorylation of repair and signaling proteins at DNA double strand breaks"/>
</dbReference>
<dbReference type="Reactome" id="R-SPO-5693607">
    <property type="pathway name" value="Processing of DNA double-strand break ends"/>
</dbReference>
<dbReference type="Reactome" id="R-SPO-9018519">
    <property type="pathway name" value="Estrogen-dependent gene expression"/>
</dbReference>
<dbReference type="PRO" id="PR:O94446"/>
<dbReference type="Proteomes" id="UP000002485">
    <property type="component" value="Chromosome I"/>
</dbReference>
<dbReference type="GO" id="GO:0000785">
    <property type="term" value="C:chromatin"/>
    <property type="evidence" value="ECO:0000318"/>
    <property type="project" value="GO_Central"/>
</dbReference>
<dbReference type="GO" id="GO:0035267">
    <property type="term" value="C:NuA4 histone acetyltransferase complex"/>
    <property type="evidence" value="ECO:0000314"/>
    <property type="project" value="PomBase"/>
</dbReference>
<dbReference type="GO" id="GO:0005634">
    <property type="term" value="C:nucleus"/>
    <property type="evidence" value="ECO:0007005"/>
    <property type="project" value="PomBase"/>
</dbReference>
<dbReference type="GO" id="GO:0005721">
    <property type="term" value="C:pericentric heterochromatin"/>
    <property type="evidence" value="ECO:0000314"/>
    <property type="project" value="PomBase"/>
</dbReference>
<dbReference type="GO" id="GO:0035861">
    <property type="term" value="C:site of double-strand break"/>
    <property type="evidence" value="ECO:0000314"/>
    <property type="project" value="PomBase"/>
</dbReference>
<dbReference type="GO" id="GO:0000812">
    <property type="term" value="C:Swr1 complex"/>
    <property type="evidence" value="ECO:0000314"/>
    <property type="project" value="PomBase"/>
</dbReference>
<dbReference type="GO" id="GO:0003682">
    <property type="term" value="F:chromatin binding"/>
    <property type="evidence" value="ECO:0000318"/>
    <property type="project" value="GO_Central"/>
</dbReference>
<dbReference type="GO" id="GO:0004402">
    <property type="term" value="F:histone acetyltransferase activity"/>
    <property type="evidence" value="ECO:0000318"/>
    <property type="project" value="GO_Central"/>
</dbReference>
<dbReference type="GO" id="GO:0044016">
    <property type="term" value="F:histone H3K4 acetyltransferase activity"/>
    <property type="evidence" value="ECO:0000314"/>
    <property type="project" value="PomBase"/>
</dbReference>
<dbReference type="GO" id="GO:0010485">
    <property type="term" value="F:histone H4 acetyltransferase activity"/>
    <property type="evidence" value="ECO:0000266"/>
    <property type="project" value="PomBase"/>
</dbReference>
<dbReference type="GO" id="GO:0106226">
    <property type="term" value="F:peptide 2-hydroxyisobutyryltransferase activity"/>
    <property type="evidence" value="ECO:0007669"/>
    <property type="project" value="RHEA"/>
</dbReference>
<dbReference type="GO" id="GO:0140065">
    <property type="term" value="F:peptide butyryltransferase activity"/>
    <property type="evidence" value="ECO:0000314"/>
    <property type="project" value="UniProtKB"/>
</dbReference>
<dbReference type="GO" id="GO:0140064">
    <property type="term" value="F:peptide crotonyltransferase activity"/>
    <property type="evidence" value="ECO:0007669"/>
    <property type="project" value="RHEA"/>
</dbReference>
<dbReference type="GO" id="GO:0003712">
    <property type="term" value="F:transcription coregulator activity"/>
    <property type="evidence" value="ECO:0000318"/>
    <property type="project" value="GO_Central"/>
</dbReference>
<dbReference type="GO" id="GO:0008270">
    <property type="term" value="F:zinc ion binding"/>
    <property type="evidence" value="ECO:0007669"/>
    <property type="project" value="UniProtKB-KW"/>
</dbReference>
<dbReference type="GO" id="GO:0006281">
    <property type="term" value="P:DNA repair"/>
    <property type="evidence" value="ECO:0007669"/>
    <property type="project" value="UniProtKB-KW"/>
</dbReference>
<dbReference type="GO" id="GO:0140861">
    <property type="term" value="P:DNA repair-dependent chromatin remodeling"/>
    <property type="evidence" value="ECO:0000315"/>
    <property type="project" value="PomBase"/>
</dbReference>
<dbReference type="GO" id="GO:0031453">
    <property type="term" value="P:positive regulation of heterochromatin formation"/>
    <property type="evidence" value="ECO:0000315"/>
    <property type="project" value="PomBase"/>
</dbReference>
<dbReference type="GO" id="GO:0006357">
    <property type="term" value="P:regulation of transcription by RNA polymerase II"/>
    <property type="evidence" value="ECO:0000318"/>
    <property type="project" value="GO_Central"/>
</dbReference>
<dbReference type="CDD" id="cd04301">
    <property type="entry name" value="NAT_SF"/>
    <property type="match status" value="1"/>
</dbReference>
<dbReference type="FunFam" id="1.10.10.10:FF:000022">
    <property type="entry name" value="Histone acetyltransferase"/>
    <property type="match status" value="1"/>
</dbReference>
<dbReference type="FunFam" id="3.30.60.60:FF:000001">
    <property type="entry name" value="Histone acetyltransferase"/>
    <property type="match status" value="1"/>
</dbReference>
<dbReference type="FunFam" id="3.40.630.30:FF:000002">
    <property type="entry name" value="Histone acetyltransferase"/>
    <property type="match status" value="1"/>
</dbReference>
<dbReference type="Gene3D" id="2.30.30.140">
    <property type="match status" value="1"/>
</dbReference>
<dbReference type="Gene3D" id="3.40.630.30">
    <property type="match status" value="1"/>
</dbReference>
<dbReference type="Gene3D" id="3.30.60.60">
    <property type="entry name" value="N-acetyl transferase-like"/>
    <property type="match status" value="1"/>
</dbReference>
<dbReference type="Gene3D" id="1.10.10.10">
    <property type="entry name" value="Winged helix-like DNA-binding domain superfamily/Winged helix DNA-binding domain"/>
    <property type="match status" value="1"/>
</dbReference>
<dbReference type="InterPro" id="IPR016181">
    <property type="entry name" value="Acyl_CoA_acyltransferase"/>
</dbReference>
<dbReference type="InterPro" id="IPR016197">
    <property type="entry name" value="Chromo-like_dom_sf"/>
</dbReference>
<dbReference type="InterPro" id="IPR000953">
    <property type="entry name" value="Chromo/chromo_shadow_dom"/>
</dbReference>
<dbReference type="InterPro" id="IPR002717">
    <property type="entry name" value="HAT_MYST-type"/>
</dbReference>
<dbReference type="InterPro" id="IPR050603">
    <property type="entry name" value="MYST_HAT"/>
</dbReference>
<dbReference type="InterPro" id="IPR025995">
    <property type="entry name" value="Tudor-knot"/>
</dbReference>
<dbReference type="InterPro" id="IPR036388">
    <property type="entry name" value="WH-like_DNA-bd_sf"/>
</dbReference>
<dbReference type="InterPro" id="IPR040706">
    <property type="entry name" value="Zf-MYST"/>
</dbReference>
<dbReference type="PANTHER" id="PTHR10615">
    <property type="entry name" value="HISTONE ACETYLTRANSFERASE"/>
    <property type="match status" value="1"/>
</dbReference>
<dbReference type="PANTHER" id="PTHR10615:SF218">
    <property type="entry name" value="HISTONE ACETYLTRANSFERASE ESA1"/>
    <property type="match status" value="1"/>
</dbReference>
<dbReference type="Pfam" id="PF01853">
    <property type="entry name" value="MOZ_SAS"/>
    <property type="match status" value="1"/>
</dbReference>
<dbReference type="Pfam" id="PF11717">
    <property type="entry name" value="Tudor-knot"/>
    <property type="match status" value="1"/>
</dbReference>
<dbReference type="Pfam" id="PF17772">
    <property type="entry name" value="zf-MYST"/>
    <property type="match status" value="1"/>
</dbReference>
<dbReference type="SMART" id="SM00298">
    <property type="entry name" value="CHROMO"/>
    <property type="match status" value="1"/>
</dbReference>
<dbReference type="SUPFAM" id="SSF55729">
    <property type="entry name" value="Acyl-CoA N-acyltransferases (Nat)"/>
    <property type="match status" value="1"/>
</dbReference>
<dbReference type="SUPFAM" id="SSF54160">
    <property type="entry name" value="Chromo domain-like"/>
    <property type="match status" value="1"/>
</dbReference>
<dbReference type="PROSITE" id="PS51726">
    <property type="entry name" value="MYST_HAT"/>
    <property type="match status" value="1"/>
</dbReference>
<gene>
    <name evidence="12 13 15" type="primary">mst1</name>
    <name type="synonym">esa1</name>
    <name evidence="13" type="synonym">kat5</name>
    <name type="ORF">SPAC637.12c</name>
</gene>
<keyword id="KW-0007">Acetylation</keyword>
<keyword id="KW-0010">Activator</keyword>
<keyword id="KW-0156">Chromatin regulator</keyword>
<keyword id="KW-0158">Chromosome</keyword>
<keyword id="KW-0227">DNA damage</keyword>
<keyword id="KW-0234">DNA repair</keyword>
<keyword id="KW-0479">Metal-binding</keyword>
<keyword id="KW-0539">Nucleus</keyword>
<keyword id="KW-1185">Reference proteome</keyword>
<keyword id="KW-0804">Transcription</keyword>
<keyword id="KW-0805">Transcription regulation</keyword>
<keyword id="KW-0808">Transferase</keyword>
<keyword id="KW-0862">Zinc</keyword>
<keyword id="KW-0863">Zinc-finger</keyword>
<name>ESA1_SCHPO</name>
<organism>
    <name type="scientific">Schizosaccharomyces pombe (strain 972 / ATCC 24843)</name>
    <name type="common">Fission yeast</name>
    <dbReference type="NCBI Taxonomy" id="284812"/>
    <lineage>
        <taxon>Eukaryota</taxon>
        <taxon>Fungi</taxon>
        <taxon>Dikarya</taxon>
        <taxon>Ascomycota</taxon>
        <taxon>Taphrinomycotina</taxon>
        <taxon>Schizosaccharomycetes</taxon>
        <taxon>Schizosaccharomycetales</taxon>
        <taxon>Schizosaccharomycetaceae</taxon>
        <taxon>Schizosaccharomyces</taxon>
    </lineage>
</organism>
<feature type="chain" id="PRO_0000051564" description="Histone acetyltransferase mst1">
    <location>
        <begin position="1"/>
        <end position="463"/>
    </location>
</feature>
<feature type="domain" description="Tudor-knot" evidence="2">
    <location>
        <begin position="22"/>
        <end position="74"/>
    </location>
</feature>
<feature type="domain" description="MYST-type HAT" evidence="3">
    <location>
        <begin position="179"/>
        <end position="451"/>
    </location>
</feature>
<feature type="zinc finger region" description="C2HC MYST-type" evidence="3">
    <location>
        <begin position="212"/>
        <end position="237"/>
    </location>
</feature>
<feature type="region of interest" description="Disordered" evidence="4">
    <location>
        <begin position="76"/>
        <end position="145"/>
    </location>
</feature>
<feature type="short sequence motif" description="ESA1-RPD3 motif">
    <location>
        <begin position="262"/>
        <end position="283"/>
    </location>
</feature>
<feature type="compositionally biased region" description="Basic residues" evidence="4">
    <location>
        <begin position="87"/>
        <end position="99"/>
    </location>
</feature>
<feature type="compositionally biased region" description="Low complexity" evidence="4">
    <location>
        <begin position="111"/>
        <end position="121"/>
    </location>
</feature>
<feature type="active site" description="Proton donor/acceptor" evidence="1">
    <location>
        <position position="355"/>
    </location>
</feature>
<feature type="binding site" evidence="1">
    <location>
        <begin position="320"/>
        <end position="324"/>
    </location>
    <ligand>
        <name>acetyl-CoA</name>
        <dbReference type="ChEBI" id="CHEBI:57288"/>
    </ligand>
</feature>
<feature type="binding site" evidence="1">
    <location>
        <begin position="329"/>
        <end position="335"/>
    </location>
    <ligand>
        <name>acetyl-CoA</name>
        <dbReference type="ChEBI" id="CHEBI:57288"/>
    </ligand>
</feature>
<feature type="binding site" evidence="1">
    <location>
        <position position="359"/>
    </location>
    <ligand>
        <name>acetyl-CoA</name>
        <dbReference type="ChEBI" id="CHEBI:57288"/>
    </ligand>
</feature>
<feature type="site" description="Important for catalytic activity" evidence="1">
    <location>
        <position position="321"/>
    </location>
</feature>
<feature type="modified residue" description="N6-acetyllysine; by autocatalysis" evidence="1">
    <location>
        <position position="279"/>
    </location>
</feature>
<feature type="mutagenesis site" description="Temperature-sensitive mutation; sensitivity to DNA damaging agents even at permissive temperatures. Impaired repair of DNA double-strand breaks (DSBs) through homologous recombination." evidence="8 11">
    <original>L</original>
    <variation>S</variation>
    <location>
        <position position="344"/>
    </location>
</feature>
<sequence>MSNDVDDESKIETKSYEAKDIVYKSKVFAFKDGEYRKAEILMIQKRTRGVVYYVHYNDYNKRLDEWITIDNIDLSKGIEYPPPEKPKKAHGKGKSSKRPKAVDRRRSITAPSKTEPSTPSTEKPEPSTPSGESDHGSNAGNESLPLLEEDHKPESLSKEQEVERLRFSGSMVQNPHEIARIRNINKICIGDHEIEPWYFSPYPKEFSEVDIVYICSFCFCYYGSERQFQRHREKCTLQHPPGNEIYRDDYISFFEIDGRKQRTWCRNICLLSKLFLDHKMLYYDVDPFLFYCMCRRDEYGCHLVGYFSKEKESSENYNLACILTLPQYQRHGYGKLLIQFSYELTKREHKHGSPEKPLSDLGLISYRAYWAEQIINLVLGMRTETTIDELANKTSMTTNDVLHTLQALNMLKYYKGQFIICISDGIEQQYERLKNKKRRRINGDLLADWQPPVFHPSQLRFGW</sequence>
<reference key="1">
    <citation type="journal article" date="2002" name="Nature">
        <title>The genome sequence of Schizosaccharomyces pombe.</title>
        <authorList>
            <person name="Wood V."/>
            <person name="Gwilliam R."/>
            <person name="Rajandream M.A."/>
            <person name="Lyne M.H."/>
            <person name="Lyne R."/>
            <person name="Stewart A."/>
            <person name="Sgouros J.G."/>
            <person name="Peat N."/>
            <person name="Hayles J."/>
            <person name="Baker S.G."/>
            <person name="Basham D."/>
            <person name="Bowman S."/>
            <person name="Brooks K."/>
            <person name="Brown D."/>
            <person name="Brown S."/>
            <person name="Chillingworth T."/>
            <person name="Churcher C.M."/>
            <person name="Collins M."/>
            <person name="Connor R."/>
            <person name="Cronin A."/>
            <person name="Davis P."/>
            <person name="Feltwell T."/>
            <person name="Fraser A."/>
            <person name="Gentles S."/>
            <person name="Goble A."/>
            <person name="Hamlin N."/>
            <person name="Harris D.E."/>
            <person name="Hidalgo J."/>
            <person name="Hodgson G."/>
            <person name="Holroyd S."/>
            <person name="Hornsby T."/>
            <person name="Howarth S."/>
            <person name="Huckle E.J."/>
            <person name="Hunt S."/>
            <person name="Jagels K."/>
            <person name="James K.D."/>
            <person name="Jones L."/>
            <person name="Jones M."/>
            <person name="Leather S."/>
            <person name="McDonald S."/>
            <person name="McLean J."/>
            <person name="Mooney P."/>
            <person name="Moule S."/>
            <person name="Mungall K.L."/>
            <person name="Murphy L.D."/>
            <person name="Niblett D."/>
            <person name="Odell C."/>
            <person name="Oliver K."/>
            <person name="O'Neil S."/>
            <person name="Pearson D."/>
            <person name="Quail M.A."/>
            <person name="Rabbinowitsch E."/>
            <person name="Rutherford K.M."/>
            <person name="Rutter S."/>
            <person name="Saunders D."/>
            <person name="Seeger K."/>
            <person name="Sharp S."/>
            <person name="Skelton J."/>
            <person name="Simmonds M.N."/>
            <person name="Squares R."/>
            <person name="Squares S."/>
            <person name="Stevens K."/>
            <person name="Taylor K."/>
            <person name="Taylor R.G."/>
            <person name="Tivey A."/>
            <person name="Walsh S.V."/>
            <person name="Warren T."/>
            <person name="Whitehead S."/>
            <person name="Woodward J.R."/>
            <person name="Volckaert G."/>
            <person name="Aert R."/>
            <person name="Robben J."/>
            <person name="Grymonprez B."/>
            <person name="Weltjens I."/>
            <person name="Vanstreels E."/>
            <person name="Rieger M."/>
            <person name="Schaefer M."/>
            <person name="Mueller-Auer S."/>
            <person name="Gabel C."/>
            <person name="Fuchs M."/>
            <person name="Duesterhoeft A."/>
            <person name="Fritzc C."/>
            <person name="Holzer E."/>
            <person name="Moestl D."/>
            <person name="Hilbert H."/>
            <person name="Borzym K."/>
            <person name="Langer I."/>
            <person name="Beck A."/>
            <person name="Lehrach H."/>
            <person name="Reinhardt R."/>
            <person name="Pohl T.M."/>
            <person name="Eger P."/>
            <person name="Zimmermann W."/>
            <person name="Wedler H."/>
            <person name="Wambutt R."/>
            <person name="Purnelle B."/>
            <person name="Goffeau A."/>
            <person name="Cadieu E."/>
            <person name="Dreano S."/>
            <person name="Gloux S."/>
            <person name="Lelaure V."/>
            <person name="Mottier S."/>
            <person name="Galibert F."/>
            <person name="Aves S.J."/>
            <person name="Xiang Z."/>
            <person name="Hunt C."/>
            <person name="Moore K."/>
            <person name="Hurst S.M."/>
            <person name="Lucas M."/>
            <person name="Rochet M."/>
            <person name="Gaillardin C."/>
            <person name="Tallada V.A."/>
            <person name="Garzon A."/>
            <person name="Thode G."/>
            <person name="Daga R.R."/>
            <person name="Cruzado L."/>
            <person name="Jimenez J."/>
            <person name="Sanchez M."/>
            <person name="del Rey F."/>
            <person name="Benito J."/>
            <person name="Dominguez A."/>
            <person name="Revuelta J.L."/>
            <person name="Moreno S."/>
            <person name="Armstrong J."/>
            <person name="Forsburg S.L."/>
            <person name="Cerutti L."/>
            <person name="Lowe T."/>
            <person name="McCombie W.R."/>
            <person name="Paulsen I."/>
            <person name="Potashkin J."/>
            <person name="Shpakovski G.V."/>
            <person name="Ussery D."/>
            <person name="Barrell B.G."/>
            <person name="Nurse P."/>
        </authorList>
    </citation>
    <scope>NUCLEOTIDE SEQUENCE [LARGE SCALE GENOMIC DNA]</scope>
    <source>
        <strain>972 / ATCC 24843</strain>
    </source>
</reference>
<reference key="2">
    <citation type="journal article" date="2000" name="Genes Cells">
        <title>Large-scale screening of intracellular protein localization in living fission yeast cells by the use of a GFP-fusion genomic DNA library.</title>
        <authorList>
            <person name="Ding D.-Q."/>
            <person name="Tomita Y."/>
            <person name="Yamamoto A."/>
            <person name="Chikashige Y."/>
            <person name="Haraguchi T."/>
            <person name="Hiraoka Y."/>
        </authorList>
    </citation>
    <scope>NUCLEOTIDE SEQUENCE [LARGE SCALE GENOMIC DNA] OF 263-441</scope>
    <scope>SUBCELLULAR LOCATION</scope>
    <source>
        <strain>ATCC 38364 / 968</strain>
    </source>
</reference>
<reference key="3">
    <citation type="journal article" date="2005" name="Mol. Biol. Cell">
        <title>BAF53/Arp4 homolog Alp5 in fission yeast is required for histone H4 acetylation, kinetochore-spindle attachment, and gene silencing at centromere.</title>
        <authorList>
            <person name="Minoda A."/>
            <person name="Saitoh S."/>
            <person name="Takahashi K."/>
            <person name="Toda T."/>
        </authorList>
    </citation>
    <scope>INTERACTION WITH ARP4</scope>
</reference>
<reference key="4">
    <citation type="journal article" date="2005" name="Mol. Cell. Biol.">
        <title>Schizosaccharomyces pombe mst2+ encodes a MYST family histone acetyltransferase that negatively regulates telomere silencing.</title>
        <authorList>
            <person name="Gomez E.B."/>
            <person name="Espinosa J.M."/>
            <person name="Forsburg S.L."/>
        </authorList>
    </citation>
    <scope>FUNCTION</scope>
    <scope>SUBCELLULAR LOCATION</scope>
</reference>
<reference key="5">
    <citation type="journal article" date="2008" name="Genetics">
        <title>Schizosaccharomyces pombe histone acetyltransferase Mst1 (KAT5) is an essential protein required for damage response and chromosome segregation.</title>
        <authorList>
            <person name="Gomez E.B."/>
            <person name="Nugent R.L."/>
            <person name="Laria S."/>
            <person name="Forsburg S.L."/>
        </authorList>
    </citation>
    <scope>FUNCTION</scope>
    <scope>MUTAGENESIS OF LEU-344</scope>
</reference>
<reference key="6">
    <citation type="journal article" date="2010" name="Genes Dev.">
        <title>A chromodomain switch mediated by histone H3 Lys 4 acetylation regulates heterochromatin assembly.</title>
        <authorList>
            <person name="Xhemalce B."/>
            <person name="Kouzarides T."/>
        </authorList>
    </citation>
    <scope>FUNCTION</scope>
    <scope>CATALYTIC ACTIVITY</scope>
    <scope>SUBCELLULAR LOCATION</scope>
</reference>
<reference key="7">
    <citation type="journal article" date="2018" name="Cell Res.">
        <title>Landscape of the regulatory elements for lysine 2-hydroxyisobutyrylation pathway.</title>
        <authorList>
            <person name="Huang H."/>
            <person name="Luo Z."/>
            <person name="Qi S."/>
            <person name="Huang J."/>
            <person name="Xu P."/>
            <person name="Wang X."/>
            <person name="Gao L."/>
            <person name="Li F."/>
            <person name="Wang J."/>
            <person name="Zhao W."/>
            <person name="Gu W."/>
            <person name="Chen Z."/>
            <person name="Dai L."/>
            <person name="Dai J."/>
            <person name="Zhao Y."/>
        </authorList>
    </citation>
    <scope>FUNCTION</scope>
    <scope>CATALYTIC ACTIVITY</scope>
</reference>
<reference key="8">
    <citation type="journal article" date="2021" name="Genetics">
        <title>Schizosaccharomyces pombe KAT5 contributes to resection and repair of a DNA double-strand break.</title>
        <authorList>
            <person name="Li T."/>
            <person name="Petreaca R.C."/>
            <person name="Forsburg S.L."/>
        </authorList>
    </citation>
    <scope>FUNCTION</scope>
    <scope>SUBCELLULAR LOCATION</scope>
    <scope>MUTAGENESIS OF LEU-344</scope>
</reference>
<accession>O94446</accession>
<accession>Q9USC8</accession>